<reference key="1">
    <citation type="journal article" date="1997" name="Science">
        <title>The complete genome sequence of Escherichia coli K-12.</title>
        <authorList>
            <person name="Blattner F.R."/>
            <person name="Plunkett G. III"/>
            <person name="Bloch C.A."/>
            <person name="Perna N.T."/>
            <person name="Burland V."/>
            <person name="Riley M."/>
            <person name="Collado-Vides J."/>
            <person name="Glasner J.D."/>
            <person name="Rode C.K."/>
            <person name="Mayhew G.F."/>
            <person name="Gregor J."/>
            <person name="Davis N.W."/>
            <person name="Kirkpatrick H.A."/>
            <person name="Goeden M.A."/>
            <person name="Rose D.J."/>
            <person name="Mau B."/>
            <person name="Shao Y."/>
        </authorList>
    </citation>
    <scope>NUCLEOTIDE SEQUENCE [LARGE SCALE GENOMIC DNA]</scope>
    <source>
        <strain>K12 / MG1655 / ATCC 47076</strain>
    </source>
</reference>
<reference key="2">
    <citation type="journal article" date="2006" name="Mol. Syst. Biol.">
        <title>Highly accurate genome sequences of Escherichia coli K-12 strains MG1655 and W3110.</title>
        <authorList>
            <person name="Hayashi K."/>
            <person name="Morooka N."/>
            <person name="Yamamoto Y."/>
            <person name="Fujita K."/>
            <person name="Isono K."/>
            <person name="Choi S."/>
            <person name="Ohtsubo E."/>
            <person name="Baba T."/>
            <person name="Wanner B.L."/>
            <person name="Mori H."/>
            <person name="Horiuchi T."/>
        </authorList>
    </citation>
    <scope>NUCLEOTIDE SEQUENCE [LARGE SCALE GENOMIC DNA]</scope>
    <source>
        <strain>K12 / W3110 / ATCC 27325 / DSM 5911</strain>
    </source>
</reference>
<reference key="3">
    <citation type="journal article" date="1989" name="Nucleic Acids Res.">
        <title>The complete nucleotide sequence of the tdc region of Escherichia coli.</title>
        <authorList>
            <person name="Schweizer H."/>
            <person name="Datta P."/>
        </authorList>
    </citation>
    <scope>NUCLEOTIDE SEQUENCE [GENOMIC DNA] OF 1-185</scope>
    <source>
        <strain>K12 / W3110 / ATCC 27325 / DSM 5911</strain>
    </source>
</reference>
<reference key="4">
    <citation type="journal article" date="1989" name="Mol. Gen. Genet.">
        <title>Identification and DNA sequence of tdcR, a positive regulatory gene of the tdc operon of Escherichia coli.</title>
        <authorList>
            <person name="Schweizer H.P."/>
            <person name="Datta P."/>
        </authorList>
    </citation>
    <scope>NUCLEOTIDE SEQUENCE [GENOMIC DNA] OF 1-185</scope>
    <source>
        <strain>K12 / W3110 / ATCC 27325 / DSM 5911</strain>
    </source>
</reference>
<reference key="5">
    <citation type="journal article" date="1991" name="J. Bacteriol.">
        <title>Precise mapping of the rnpB gene encoding the RNA component of RNase P in Escherichia coli K-12.</title>
        <authorList>
            <person name="Komine Y."/>
            <person name="Inokuchi H."/>
        </authorList>
    </citation>
    <scope>NUCLEOTIDE SEQUENCE [GENOMIC DNA] OF 149-395</scope>
    <source>
        <strain>K12</strain>
    </source>
</reference>
<reference key="6">
    <citation type="journal article" date="1983" name="Proc. Natl. Acad. Sci. U.S.A.">
        <title>Repeated sequences and open reading frames in the 3' flanking region of the gene for the RNA subunit of Escherichia coli ribonuclease P.</title>
        <authorList>
            <person name="Reed R.E."/>
            <person name="Altman S."/>
        </authorList>
    </citation>
    <scope>NUCLEOTIDE SEQUENCE [GENOMIC DNA] OF 354-395</scope>
</reference>
<organism>
    <name type="scientific">Escherichia coli (strain K12)</name>
    <dbReference type="NCBI Taxonomy" id="83333"/>
    <lineage>
        <taxon>Bacteria</taxon>
        <taxon>Pseudomonadati</taxon>
        <taxon>Pseudomonadota</taxon>
        <taxon>Gammaproteobacteria</taxon>
        <taxon>Enterobacterales</taxon>
        <taxon>Enterobacteriaceae</taxon>
        <taxon>Escherichia</taxon>
    </lineage>
</organism>
<protein>
    <recommendedName>
        <fullName>Uncharacterized protein YhaC</fullName>
    </recommendedName>
    <alternativeName>
        <fullName>ORF B'</fullName>
    </alternativeName>
    <alternativeName>
        <fullName>ORFX</fullName>
    </alternativeName>
</protein>
<gene>
    <name type="primary">yhaC</name>
    <name type="ordered locus">b3121</name>
    <name type="ordered locus">JW3092</name>
</gene>
<name>YHAC_ECOLI</name>
<feature type="chain" id="PRO_0000169442" description="Uncharacterized protein YhaC">
    <location>
        <begin position="1"/>
        <end position="395"/>
    </location>
</feature>
<accession>P11864</accession>
<accession>Q2M986</accession>
<dbReference type="EMBL" id="U18997">
    <property type="protein sequence ID" value="AAA57925.1"/>
    <property type="molecule type" value="Genomic_DNA"/>
</dbReference>
<dbReference type="EMBL" id="U00096">
    <property type="protein sequence ID" value="AAC76156.1"/>
    <property type="molecule type" value="Genomic_DNA"/>
</dbReference>
<dbReference type="EMBL" id="AP009048">
    <property type="protein sequence ID" value="BAE77170.1"/>
    <property type="molecule type" value="Genomic_DNA"/>
</dbReference>
<dbReference type="EMBL" id="X14430">
    <property type="protein sequence ID" value="CAA32589.1"/>
    <property type="molecule type" value="Genomic_DNA"/>
</dbReference>
<dbReference type="EMBL" id="X16445">
    <property type="protein sequence ID" value="CAA34466.1"/>
    <property type="molecule type" value="Genomic_DNA"/>
</dbReference>
<dbReference type="EMBL" id="D90212">
    <property type="protein sequence ID" value="BAA14240.1"/>
    <property type="molecule type" value="Genomic_DNA"/>
</dbReference>
<dbReference type="PIR" id="JU0026">
    <property type="entry name" value="Q0ECTR"/>
</dbReference>
<dbReference type="RefSeq" id="NP_417591.1">
    <property type="nucleotide sequence ID" value="NC_000913.3"/>
</dbReference>
<dbReference type="RefSeq" id="WP_000484600.1">
    <property type="nucleotide sequence ID" value="NZ_LN832404.1"/>
</dbReference>
<dbReference type="SMR" id="P11864"/>
<dbReference type="BioGRID" id="4259490">
    <property type="interactions" value="11"/>
</dbReference>
<dbReference type="FunCoup" id="P11864">
    <property type="interactions" value="34"/>
</dbReference>
<dbReference type="STRING" id="511145.b3121"/>
<dbReference type="PaxDb" id="511145-b3121"/>
<dbReference type="EnsemblBacteria" id="AAC76156">
    <property type="protein sequence ID" value="AAC76156"/>
    <property type="gene ID" value="b3121"/>
</dbReference>
<dbReference type="GeneID" id="947557"/>
<dbReference type="KEGG" id="ecj:JW3092"/>
<dbReference type="KEGG" id="eco:b3121"/>
<dbReference type="KEGG" id="ecoc:C3026_17020"/>
<dbReference type="PATRIC" id="fig|511145.12.peg.3215"/>
<dbReference type="EchoBASE" id="EB1161"/>
<dbReference type="HOGENOM" id="CLU_068646_0_0_6"/>
<dbReference type="InParanoid" id="P11864"/>
<dbReference type="OMA" id="EDYTYNY"/>
<dbReference type="BioCyc" id="EcoCyc:EG11174-MONOMER"/>
<dbReference type="PRO" id="PR:P11864"/>
<dbReference type="Proteomes" id="UP000000625">
    <property type="component" value="Chromosome"/>
</dbReference>
<dbReference type="GO" id="GO:0006974">
    <property type="term" value="P:DNA damage response"/>
    <property type="evidence" value="ECO:0000270"/>
    <property type="project" value="EcoliWiki"/>
</dbReference>
<dbReference type="Gene3D" id="2.160.20.80">
    <property type="entry name" value="E3 ubiquitin-protein ligase SopA"/>
    <property type="match status" value="1"/>
</dbReference>
<dbReference type="NCBIfam" id="NF007262">
    <property type="entry name" value="PRK09716.1"/>
    <property type="match status" value="1"/>
</dbReference>
<dbReference type="SUPFAM" id="SSF141571">
    <property type="entry name" value="Pentapeptide repeat-like"/>
    <property type="match status" value="1"/>
</dbReference>
<keyword id="KW-1185">Reference proteome</keyword>
<sequence length="395" mass="45251">MFPVSSIGNDISSDLVRRKMNDLPESPTGNNLEALAPGIEKLKQTSIEMVTLLNTLQPGGKCIITGDFQKELAYLQNVILYNVSSLRLDFLGYNAQIIQRSDNTCELTINEPLKNQEISTGNININCPLKDIYNEIRRLNVIFSCGTGDIVDLSSLDLRNVDLDYYDFTDKHMANTILNPFKLNSTNFTNANMFQVNFVSSTQNATISWDYLLKITPVLISISDMYSEEKIKFVESCLNEPGDITEEQLKIMRFAIIKSIPRATLTDKLENELTKEIYKSSSKIINCLNRIKLTEMKEFSSEKIYDYIDIIIEDYENTKENAYLVVPQINYTMDLNIEDSSSEELLSDNTLEKDENSPDNGFEVGEYNTYEAYNSEKQYFTREDYTYDYDLLNAI</sequence>
<proteinExistence type="predicted"/>